<reference evidence="5" key="1">
    <citation type="journal article" date="2003" name="Biochim. Biophys. Acta">
        <title>Molecular cloning of PP2Ceta, a novel member of the protein phosphatase 2C family.</title>
        <authorList>
            <person name="Komaki K."/>
            <person name="Katsura K."/>
            <person name="Ohnishi M."/>
            <person name="Li M.G."/>
            <person name="Sasaki M."/>
            <person name="Watanabe M."/>
            <person name="Kobayashi T."/>
            <person name="Tamura S."/>
        </authorList>
    </citation>
    <scope>NUCLEOTIDE SEQUENCE [MRNA] (ISOFORM 1)</scope>
    <scope>FUNCTION</scope>
    <scope>SUBCELLULAR LOCATION</scope>
    <scope>TISSUE SPECIFICITY</scope>
    <source>
        <tissue evidence="6">Embryo</tissue>
    </source>
</reference>
<reference key="2">
    <citation type="journal article" date="2005" name="Science">
        <title>The transcriptional landscape of the mammalian genome.</title>
        <authorList>
            <person name="Carninci P."/>
            <person name="Kasukawa T."/>
            <person name="Katayama S."/>
            <person name="Gough J."/>
            <person name="Frith M.C."/>
            <person name="Maeda N."/>
            <person name="Oyama R."/>
            <person name="Ravasi T."/>
            <person name="Lenhard B."/>
            <person name="Wells C."/>
            <person name="Kodzius R."/>
            <person name="Shimokawa K."/>
            <person name="Bajic V.B."/>
            <person name="Brenner S.E."/>
            <person name="Batalov S."/>
            <person name="Forrest A.R."/>
            <person name="Zavolan M."/>
            <person name="Davis M.J."/>
            <person name="Wilming L.G."/>
            <person name="Aidinis V."/>
            <person name="Allen J.E."/>
            <person name="Ambesi-Impiombato A."/>
            <person name="Apweiler R."/>
            <person name="Aturaliya R.N."/>
            <person name="Bailey T.L."/>
            <person name="Bansal M."/>
            <person name="Baxter L."/>
            <person name="Beisel K.W."/>
            <person name="Bersano T."/>
            <person name="Bono H."/>
            <person name="Chalk A.M."/>
            <person name="Chiu K.P."/>
            <person name="Choudhary V."/>
            <person name="Christoffels A."/>
            <person name="Clutterbuck D.R."/>
            <person name="Crowe M.L."/>
            <person name="Dalla E."/>
            <person name="Dalrymple B.P."/>
            <person name="de Bono B."/>
            <person name="Della Gatta G."/>
            <person name="di Bernardo D."/>
            <person name="Down T."/>
            <person name="Engstrom P."/>
            <person name="Fagiolini M."/>
            <person name="Faulkner G."/>
            <person name="Fletcher C.F."/>
            <person name="Fukushima T."/>
            <person name="Furuno M."/>
            <person name="Futaki S."/>
            <person name="Gariboldi M."/>
            <person name="Georgii-Hemming P."/>
            <person name="Gingeras T.R."/>
            <person name="Gojobori T."/>
            <person name="Green R.E."/>
            <person name="Gustincich S."/>
            <person name="Harbers M."/>
            <person name="Hayashi Y."/>
            <person name="Hensch T.K."/>
            <person name="Hirokawa N."/>
            <person name="Hill D."/>
            <person name="Huminiecki L."/>
            <person name="Iacono M."/>
            <person name="Ikeo K."/>
            <person name="Iwama A."/>
            <person name="Ishikawa T."/>
            <person name="Jakt M."/>
            <person name="Kanapin A."/>
            <person name="Katoh M."/>
            <person name="Kawasawa Y."/>
            <person name="Kelso J."/>
            <person name="Kitamura H."/>
            <person name="Kitano H."/>
            <person name="Kollias G."/>
            <person name="Krishnan S.P."/>
            <person name="Kruger A."/>
            <person name="Kummerfeld S.K."/>
            <person name="Kurochkin I.V."/>
            <person name="Lareau L.F."/>
            <person name="Lazarevic D."/>
            <person name="Lipovich L."/>
            <person name="Liu J."/>
            <person name="Liuni S."/>
            <person name="McWilliam S."/>
            <person name="Madan Babu M."/>
            <person name="Madera M."/>
            <person name="Marchionni L."/>
            <person name="Matsuda H."/>
            <person name="Matsuzawa S."/>
            <person name="Miki H."/>
            <person name="Mignone F."/>
            <person name="Miyake S."/>
            <person name="Morris K."/>
            <person name="Mottagui-Tabar S."/>
            <person name="Mulder N."/>
            <person name="Nakano N."/>
            <person name="Nakauchi H."/>
            <person name="Ng P."/>
            <person name="Nilsson R."/>
            <person name="Nishiguchi S."/>
            <person name="Nishikawa S."/>
            <person name="Nori F."/>
            <person name="Ohara O."/>
            <person name="Okazaki Y."/>
            <person name="Orlando V."/>
            <person name="Pang K.C."/>
            <person name="Pavan W.J."/>
            <person name="Pavesi G."/>
            <person name="Pesole G."/>
            <person name="Petrovsky N."/>
            <person name="Piazza S."/>
            <person name="Reed J."/>
            <person name="Reid J.F."/>
            <person name="Ring B.Z."/>
            <person name="Ringwald M."/>
            <person name="Rost B."/>
            <person name="Ruan Y."/>
            <person name="Salzberg S.L."/>
            <person name="Sandelin A."/>
            <person name="Schneider C."/>
            <person name="Schoenbach C."/>
            <person name="Sekiguchi K."/>
            <person name="Semple C.A."/>
            <person name="Seno S."/>
            <person name="Sessa L."/>
            <person name="Sheng Y."/>
            <person name="Shibata Y."/>
            <person name="Shimada H."/>
            <person name="Shimada K."/>
            <person name="Silva D."/>
            <person name="Sinclair B."/>
            <person name="Sperling S."/>
            <person name="Stupka E."/>
            <person name="Sugiura K."/>
            <person name="Sultana R."/>
            <person name="Takenaka Y."/>
            <person name="Taki K."/>
            <person name="Tammoja K."/>
            <person name="Tan S.L."/>
            <person name="Tang S."/>
            <person name="Taylor M.S."/>
            <person name="Tegner J."/>
            <person name="Teichmann S.A."/>
            <person name="Ueda H.R."/>
            <person name="van Nimwegen E."/>
            <person name="Verardo R."/>
            <person name="Wei C.L."/>
            <person name="Yagi K."/>
            <person name="Yamanishi H."/>
            <person name="Zabarovsky E."/>
            <person name="Zhu S."/>
            <person name="Zimmer A."/>
            <person name="Hide W."/>
            <person name="Bult C."/>
            <person name="Grimmond S.M."/>
            <person name="Teasdale R.D."/>
            <person name="Liu E.T."/>
            <person name="Brusic V."/>
            <person name="Quackenbush J."/>
            <person name="Wahlestedt C."/>
            <person name="Mattick J.S."/>
            <person name="Hume D.A."/>
            <person name="Kai C."/>
            <person name="Sasaki D."/>
            <person name="Tomaru Y."/>
            <person name="Fukuda S."/>
            <person name="Kanamori-Katayama M."/>
            <person name="Suzuki M."/>
            <person name="Aoki J."/>
            <person name="Arakawa T."/>
            <person name="Iida J."/>
            <person name="Imamura K."/>
            <person name="Itoh M."/>
            <person name="Kato T."/>
            <person name="Kawaji H."/>
            <person name="Kawagashira N."/>
            <person name="Kawashima T."/>
            <person name="Kojima M."/>
            <person name="Kondo S."/>
            <person name="Konno H."/>
            <person name="Nakano K."/>
            <person name="Ninomiya N."/>
            <person name="Nishio T."/>
            <person name="Okada M."/>
            <person name="Plessy C."/>
            <person name="Shibata K."/>
            <person name="Shiraki T."/>
            <person name="Suzuki S."/>
            <person name="Tagami M."/>
            <person name="Waki K."/>
            <person name="Watahiki A."/>
            <person name="Okamura-Oho Y."/>
            <person name="Suzuki H."/>
            <person name="Kawai J."/>
            <person name="Hayashizaki Y."/>
        </authorList>
    </citation>
    <scope>NUCLEOTIDE SEQUENCE [LARGE SCALE MRNA] (ISOFORM 2)</scope>
    <scope>NUCLEOTIDE SEQUENCE [LARGE SCALE MRNA] OF 10-462 (ISOFORM 3)</scope>
    <source>
        <strain>C57BL/6J</strain>
        <strain>NOD</strain>
        <tissue>Corpora quadrigemina</tissue>
        <tissue>Head</tissue>
        <tissue>Thymus</tissue>
    </source>
</reference>
<reference key="3">
    <citation type="journal article" date="2009" name="PLoS Biol.">
        <title>Lineage-specific biology revealed by a finished genome assembly of the mouse.</title>
        <authorList>
            <person name="Church D.M."/>
            <person name="Goodstadt L."/>
            <person name="Hillier L.W."/>
            <person name="Zody M.C."/>
            <person name="Goldstein S."/>
            <person name="She X."/>
            <person name="Bult C.J."/>
            <person name="Agarwala R."/>
            <person name="Cherry J.L."/>
            <person name="DiCuccio M."/>
            <person name="Hlavina W."/>
            <person name="Kapustin Y."/>
            <person name="Meric P."/>
            <person name="Maglott D."/>
            <person name="Birtle Z."/>
            <person name="Marques A.C."/>
            <person name="Graves T."/>
            <person name="Zhou S."/>
            <person name="Teague B."/>
            <person name="Potamousis K."/>
            <person name="Churas C."/>
            <person name="Place M."/>
            <person name="Herschleb J."/>
            <person name="Runnheim R."/>
            <person name="Forrest D."/>
            <person name="Amos-Landgraf J."/>
            <person name="Schwartz D.C."/>
            <person name="Cheng Z."/>
            <person name="Lindblad-Toh K."/>
            <person name="Eichler E.E."/>
            <person name="Ponting C.P."/>
        </authorList>
    </citation>
    <scope>NUCLEOTIDE SEQUENCE [LARGE SCALE GENOMIC DNA]</scope>
    <source>
        <strain>C57BL/6J</strain>
    </source>
</reference>
<keyword id="KW-0025">Alternative splicing</keyword>
<keyword id="KW-0378">Hydrolase</keyword>
<keyword id="KW-0460">Magnesium</keyword>
<keyword id="KW-0464">Manganese</keyword>
<keyword id="KW-0479">Metal-binding</keyword>
<keyword id="KW-0539">Nucleus</keyword>
<keyword id="KW-0904">Protein phosphatase</keyword>
<keyword id="KW-1185">Reference proteome</keyword>
<name>PPM1M_MOUSE</name>
<dbReference type="EC" id="3.1.3.16" evidence="2"/>
<dbReference type="EMBL" id="AY332616">
    <property type="protein sequence ID" value="AAR01612.1"/>
    <property type="molecule type" value="mRNA"/>
</dbReference>
<dbReference type="EMBL" id="AK013149">
    <property type="protein sequence ID" value="BAB28679.2"/>
    <property type="molecule type" value="mRNA"/>
</dbReference>
<dbReference type="EMBL" id="AK017245">
    <property type="protein sequence ID" value="BAB30649.1"/>
    <property type="molecule type" value="mRNA"/>
</dbReference>
<dbReference type="EMBL" id="AK046387">
    <property type="protein sequence ID" value="BAC32699.1"/>
    <property type="molecule type" value="mRNA"/>
</dbReference>
<dbReference type="EMBL" id="AK087999">
    <property type="protein sequence ID" value="BAC40085.1"/>
    <property type="molecule type" value="mRNA"/>
</dbReference>
<dbReference type="EMBL" id="AC164430">
    <property type="status" value="NOT_ANNOTATED_CDS"/>
    <property type="molecule type" value="Genomic_DNA"/>
</dbReference>
<dbReference type="CCDS" id="CCDS23471.1">
    <molecule id="Q8BU27-1"/>
</dbReference>
<dbReference type="CCDS" id="CCDS23472.2">
    <molecule id="Q8BU27-3"/>
</dbReference>
<dbReference type="RefSeq" id="NP_945149.2">
    <property type="nucleotide sequence ID" value="NM_198931.3"/>
</dbReference>
<dbReference type="SMR" id="Q8BU27"/>
<dbReference type="FunCoup" id="Q8BU27">
    <property type="interactions" value="1052"/>
</dbReference>
<dbReference type="STRING" id="10090.ENSMUSP00000117908"/>
<dbReference type="PhosphoSitePlus" id="Q8BU27"/>
<dbReference type="SwissPalm" id="Q8BU27"/>
<dbReference type="PaxDb" id="10090-ENSMUSP00000117908"/>
<dbReference type="ProteomicsDB" id="291716">
    <molecule id="Q8BU27-1"/>
</dbReference>
<dbReference type="ProteomicsDB" id="291717">
    <molecule id="Q8BU27-2"/>
</dbReference>
<dbReference type="ProteomicsDB" id="364011"/>
<dbReference type="Antibodypedia" id="31173">
    <property type="antibodies" value="170 antibodies from 24 providers"/>
</dbReference>
<dbReference type="DNASU" id="67905"/>
<dbReference type="GeneID" id="67905"/>
<dbReference type="KEGG" id="mmu:67905"/>
<dbReference type="UCSC" id="uc012gzs.1">
    <property type="organism name" value="mouse"/>
</dbReference>
<dbReference type="AGR" id="MGI:1915155"/>
<dbReference type="CTD" id="132160"/>
<dbReference type="MGI" id="MGI:1915155">
    <property type="gene designation" value="Ppm1m"/>
</dbReference>
<dbReference type="VEuPathDB" id="HostDB:ENSMUSG00000020253"/>
<dbReference type="eggNOG" id="KOG1323">
    <property type="taxonomic scope" value="Eukaryota"/>
</dbReference>
<dbReference type="HOGENOM" id="CLU_029072_2_0_1"/>
<dbReference type="InParanoid" id="Q8BU27"/>
<dbReference type="OrthoDB" id="416093at2759"/>
<dbReference type="PhylomeDB" id="Q8BU27"/>
<dbReference type="TreeFam" id="TF314700"/>
<dbReference type="BioGRID-ORCS" id="67905">
    <property type="hits" value="3 hits in 79 CRISPR screens"/>
</dbReference>
<dbReference type="ChiTaRS" id="Ppm1m">
    <property type="organism name" value="mouse"/>
</dbReference>
<dbReference type="PRO" id="PR:Q8BU27"/>
<dbReference type="Proteomes" id="UP000000589">
    <property type="component" value="Chromosome 9"/>
</dbReference>
<dbReference type="RNAct" id="Q8BU27">
    <property type="molecule type" value="protein"/>
</dbReference>
<dbReference type="Bgee" id="ENSMUSG00000020253">
    <property type="expression patterns" value="Expressed in saccule of membranous labyrinth and 250 other cell types or tissues"/>
</dbReference>
<dbReference type="GO" id="GO:0005634">
    <property type="term" value="C:nucleus"/>
    <property type="evidence" value="ECO:0000314"/>
    <property type="project" value="UniProtKB"/>
</dbReference>
<dbReference type="GO" id="GO:0030145">
    <property type="term" value="F:manganese ion binding"/>
    <property type="evidence" value="ECO:0000314"/>
    <property type="project" value="UniProtKB"/>
</dbReference>
<dbReference type="GO" id="GO:0004721">
    <property type="term" value="F:phosphoprotein phosphatase activity"/>
    <property type="evidence" value="ECO:0000314"/>
    <property type="project" value="MGI"/>
</dbReference>
<dbReference type="GO" id="GO:0004722">
    <property type="term" value="F:protein serine/threonine phosphatase activity"/>
    <property type="evidence" value="ECO:0007669"/>
    <property type="project" value="UniProtKB-EC"/>
</dbReference>
<dbReference type="GO" id="GO:0006470">
    <property type="term" value="P:protein dephosphorylation"/>
    <property type="evidence" value="ECO:0000314"/>
    <property type="project" value="UniProtKB"/>
</dbReference>
<dbReference type="CDD" id="cd00143">
    <property type="entry name" value="PP2Cc"/>
    <property type="match status" value="1"/>
</dbReference>
<dbReference type="Gene3D" id="3.60.40.10">
    <property type="entry name" value="PPM-type phosphatase domain"/>
    <property type="match status" value="1"/>
</dbReference>
<dbReference type="InterPro" id="IPR015655">
    <property type="entry name" value="PP2C"/>
</dbReference>
<dbReference type="InterPro" id="IPR036457">
    <property type="entry name" value="PPM-type-like_dom_sf"/>
</dbReference>
<dbReference type="InterPro" id="IPR001932">
    <property type="entry name" value="PPM-type_phosphatase-like_dom"/>
</dbReference>
<dbReference type="PANTHER" id="PTHR13832:SF236">
    <property type="entry name" value="PROTEIN PHOSPHATASE 1M"/>
    <property type="match status" value="1"/>
</dbReference>
<dbReference type="PANTHER" id="PTHR13832">
    <property type="entry name" value="PROTEIN PHOSPHATASE 2C"/>
    <property type="match status" value="1"/>
</dbReference>
<dbReference type="Pfam" id="PF00481">
    <property type="entry name" value="PP2C"/>
    <property type="match status" value="2"/>
</dbReference>
<dbReference type="SMART" id="SM00331">
    <property type="entry name" value="PP2C_SIG"/>
    <property type="match status" value="1"/>
</dbReference>
<dbReference type="SMART" id="SM00332">
    <property type="entry name" value="PP2Cc"/>
    <property type="match status" value="1"/>
</dbReference>
<dbReference type="SUPFAM" id="SSF81606">
    <property type="entry name" value="PP2C-like"/>
    <property type="match status" value="1"/>
</dbReference>
<dbReference type="PROSITE" id="PS51746">
    <property type="entry name" value="PPM_2"/>
    <property type="match status" value="1"/>
</dbReference>
<sequence>MSAGWFRRRFLPGGPLPEPRPAGPRSSPVPYHRPRFLRGSGSSPGATDASRRPDARPVRSPARGRTLPWNAGYAEVINAEKSEFNEDQAACGKLCIRRCEFGIEEDQEWLTVCPEEFLTGHYWALFDGHGGPAAAILAANTLHSCLRRQLEAVVEGMIAPQPPMHLSGRCVCPSDPQFVEEKGIQAEDLVIGALENAFQECDDVIGRELEASGQVGGCTALVAVFLQGKLYVANAGDSRAILVRRHEIRQLSSEFTPETERQRIQQLAFTYPELLAGEFTRLEFPRRLKGDDLGQKVLFRDHHMRGWSYKRVEKSDLKYPLIHGQGRQARLLGTLAVSRGLGDHQLRVLDTDIQLKPFLLSIPQVTVLDVHQLAVQEEDVVVMATDGLWDVLSNEQVALLVRSFLTGNQKDDPHRFSELAKMLIHNTQGKDNGATGEGQVSYDDVSVFVIPLHSQAQEGSGH</sequence>
<organism evidence="7">
    <name type="scientific">Mus musculus</name>
    <name type="common">Mouse</name>
    <dbReference type="NCBI Taxonomy" id="10090"/>
    <lineage>
        <taxon>Eukaryota</taxon>
        <taxon>Metazoa</taxon>
        <taxon>Chordata</taxon>
        <taxon>Craniata</taxon>
        <taxon>Vertebrata</taxon>
        <taxon>Euteleostomi</taxon>
        <taxon>Mammalia</taxon>
        <taxon>Eutheria</taxon>
        <taxon>Euarchontoglires</taxon>
        <taxon>Glires</taxon>
        <taxon>Rodentia</taxon>
        <taxon>Myomorpha</taxon>
        <taxon>Muroidea</taxon>
        <taxon>Muridae</taxon>
        <taxon>Murinae</taxon>
        <taxon>Mus</taxon>
        <taxon>Mus</taxon>
    </lineage>
</organism>
<evidence type="ECO:0000250" key="1">
    <source>
        <dbReference type="UniProtKB" id="P35813"/>
    </source>
</evidence>
<evidence type="ECO:0000255" key="2">
    <source>
        <dbReference type="PROSITE-ProRule" id="PRU01082"/>
    </source>
</evidence>
<evidence type="ECO:0000256" key="3">
    <source>
        <dbReference type="SAM" id="MobiDB-lite"/>
    </source>
</evidence>
<evidence type="ECO:0000269" key="4">
    <source>
    </source>
</evidence>
<evidence type="ECO:0000305" key="5"/>
<evidence type="ECO:0000312" key="6">
    <source>
        <dbReference type="EMBL" id="AAR01612.1"/>
    </source>
</evidence>
<evidence type="ECO:0000312" key="7">
    <source>
        <dbReference type="EMBL" id="BAC40085.1"/>
    </source>
</evidence>
<evidence type="ECO:0000312" key="8">
    <source>
        <dbReference type="MGI" id="MGI:1915155"/>
    </source>
</evidence>
<comment type="catalytic activity">
    <reaction evidence="2">
        <text>O-phospho-L-seryl-[protein] + H2O = L-seryl-[protein] + phosphate</text>
        <dbReference type="Rhea" id="RHEA:20629"/>
        <dbReference type="Rhea" id="RHEA-COMP:9863"/>
        <dbReference type="Rhea" id="RHEA-COMP:11604"/>
        <dbReference type="ChEBI" id="CHEBI:15377"/>
        <dbReference type="ChEBI" id="CHEBI:29999"/>
        <dbReference type="ChEBI" id="CHEBI:43474"/>
        <dbReference type="ChEBI" id="CHEBI:83421"/>
        <dbReference type="EC" id="3.1.3.16"/>
    </reaction>
</comment>
<comment type="catalytic activity">
    <reaction evidence="2">
        <text>O-phospho-L-threonyl-[protein] + H2O = L-threonyl-[protein] + phosphate</text>
        <dbReference type="Rhea" id="RHEA:47004"/>
        <dbReference type="Rhea" id="RHEA-COMP:11060"/>
        <dbReference type="Rhea" id="RHEA-COMP:11605"/>
        <dbReference type="ChEBI" id="CHEBI:15377"/>
        <dbReference type="ChEBI" id="CHEBI:30013"/>
        <dbReference type="ChEBI" id="CHEBI:43474"/>
        <dbReference type="ChEBI" id="CHEBI:61977"/>
        <dbReference type="EC" id="3.1.3.16"/>
    </reaction>
</comment>
<comment type="cofactor">
    <cofactor evidence="2">
        <name>Mg(2+)</name>
        <dbReference type="ChEBI" id="CHEBI:18420"/>
    </cofactor>
    <cofactor evidence="2">
        <name>Mn(2+)</name>
        <dbReference type="ChEBI" id="CHEBI:29035"/>
    </cofactor>
    <text evidence="2">Binds 2 magnesium or manganese ions per subunit.</text>
</comment>
<comment type="subcellular location">
    <subcellularLocation>
        <location evidence="4">Nucleus</location>
    </subcellularLocation>
</comment>
<comment type="alternative products">
    <event type="alternative splicing"/>
    <isoform>
        <id>Q8BU27-3</id>
        <name>3</name>
        <sequence type="displayed"/>
    </isoform>
    <isoform>
        <id>Q8BU27-1</id>
        <name evidence="4">1</name>
        <sequence type="described" ref="VSP_061129"/>
    </isoform>
    <isoform>
        <id>Q8BU27-2</id>
        <name evidence="5">2</name>
        <sequence type="described" ref="VSP_061128"/>
    </isoform>
</comment>
<comment type="tissue specificity">
    <text evidence="4">Widely expressed with highest levels in testis and lower levels in lung, kidney and brain.</text>
</comment>
<comment type="similarity">
    <text evidence="5">Belongs to the PP2C family.</text>
</comment>
<feature type="chain" id="PRO_0000057757" description="Protein phosphatase 1M">
    <location>
        <begin position="1"/>
        <end position="462"/>
    </location>
</feature>
<feature type="domain" description="PPM-type phosphatase" evidence="2">
    <location>
        <begin position="100"/>
        <end position="452"/>
    </location>
</feature>
<feature type="region of interest" description="Disordered" evidence="3">
    <location>
        <begin position="1"/>
        <end position="66"/>
    </location>
</feature>
<feature type="compositionally biased region" description="Basic residues" evidence="3">
    <location>
        <begin position="1"/>
        <end position="10"/>
    </location>
</feature>
<feature type="binding site" evidence="1">
    <location>
        <position position="127"/>
    </location>
    <ligand>
        <name>Mn(2+)</name>
        <dbReference type="ChEBI" id="CHEBI:29035"/>
        <label>1</label>
    </ligand>
</feature>
<feature type="binding site" evidence="1">
    <location>
        <position position="127"/>
    </location>
    <ligand>
        <name>Mn(2+)</name>
        <dbReference type="ChEBI" id="CHEBI:29035"/>
        <label>2</label>
    </ligand>
</feature>
<feature type="binding site" evidence="1">
    <location>
        <position position="128"/>
    </location>
    <ligand>
        <name>Mn(2+)</name>
        <dbReference type="ChEBI" id="CHEBI:29035"/>
        <label>1</label>
    </ligand>
</feature>
<feature type="splice variant" id="VSP_061128" description="In isoform 2.">
    <original>MSAGWFRRRFLPGGPLPEPRPAGPRSSPVPYHRPRFLRGSGSSPGATDASRRPDARPVRSPARGRTLPWNAGYAEVINAEKSEFNEDQAACGKLCIRRCEFGIEEDQEWLTVCPEEFLTGHYWALFDGHGGPAAAILAANTLHSCLRRQLEAVVEGMI</original>
    <variation>MM</variation>
    <location>
        <begin position="1"/>
        <end position="158"/>
    </location>
</feature>
<feature type="splice variant" id="VSP_061129" description="In isoform 1.">
    <original>MSAGWFRRRFLPGGPLPEPRPAGPRSSPVPYHRPRFLRGSGSSPGATDASRRPDARPVRSPARGRTLPWNAGYAE</original>
    <variation>MYVPPRTSLRVWPMLCGIR</variation>
    <location>
        <begin position="1"/>
        <end position="75"/>
    </location>
</feature>
<feature type="sequence conflict" description="In Ref. 2; BAB28679." evidence="5" ref="2">
    <original>F</original>
    <variation>V</variation>
    <location>
        <position position="10"/>
    </location>
</feature>
<feature type="sequence conflict" description="In Ref. 2; BAC32699/BAB28679." evidence="5" ref="2">
    <original>D</original>
    <variation>H</variation>
    <location>
        <position position="106"/>
    </location>
</feature>
<feature type="sequence conflict" description="In Ref. 1; AAR01612 and 2; BAC40085." evidence="5" ref="1 2">
    <original>I</original>
    <variation>M</variation>
    <location>
        <position position="158"/>
    </location>
</feature>
<feature type="sequence conflict" description="In Ref. 2; BAB30649." evidence="5" ref="2">
    <original>S</original>
    <variation>L</variation>
    <location>
        <position position="212"/>
    </location>
</feature>
<feature type="sequence conflict" description="In Ref. 2; BAB30649." evidence="5" ref="2">
    <original>F</original>
    <variation>L</variation>
    <location>
        <position position="279"/>
    </location>
</feature>
<proteinExistence type="evidence at transcript level"/>
<protein>
    <recommendedName>
        <fullName evidence="5">Protein phosphatase 1M</fullName>
        <ecNumber evidence="2">3.1.3.16</ecNumber>
    </recommendedName>
    <alternativeName>
        <fullName>Protein phosphatase 2C isoform eta</fullName>
        <shortName>PP2C-eta</shortName>
        <shortName>PP2CE</shortName>
    </alternativeName>
</protein>
<gene>
    <name evidence="8" type="primary">Ppm1m</name>
    <name type="synonym">Ppm1e</name>
</gene>
<accession>Q8BU27</accession>
<accession>E9Q2I3</accession>
<accession>Q9CSD6</accession>
<accession>Q9CU88</accession>